<proteinExistence type="inferred from homology"/>
<dbReference type="EC" id="5.3.2.1"/>
<dbReference type="EC" id="5.3.3.12"/>
<dbReference type="EMBL" id="AF040629">
    <property type="protein sequence ID" value="AAC82615.1"/>
    <property type="molecule type" value="mRNA"/>
</dbReference>
<dbReference type="SMR" id="O44786"/>
<dbReference type="STRING" id="6293.O44786"/>
<dbReference type="Proteomes" id="UP000093561">
    <property type="component" value="Unassembled WGS sequence"/>
</dbReference>
<dbReference type="GO" id="GO:0005615">
    <property type="term" value="C:extracellular space"/>
    <property type="evidence" value="ECO:0007669"/>
    <property type="project" value="UniProtKB-KW"/>
</dbReference>
<dbReference type="GO" id="GO:0005125">
    <property type="term" value="F:cytokine activity"/>
    <property type="evidence" value="ECO:0007669"/>
    <property type="project" value="UniProtKB-KW"/>
</dbReference>
<dbReference type="GO" id="GO:0004167">
    <property type="term" value="F:dopachrome isomerase activity"/>
    <property type="evidence" value="ECO:0007669"/>
    <property type="project" value="UniProtKB-EC"/>
</dbReference>
<dbReference type="GO" id="GO:0050178">
    <property type="term" value="F:phenylpyruvate tautomerase activity"/>
    <property type="evidence" value="ECO:0007669"/>
    <property type="project" value="UniProtKB-EC"/>
</dbReference>
<dbReference type="Gene3D" id="3.30.429.10">
    <property type="entry name" value="Macrophage Migration Inhibitory Factor"/>
    <property type="match status" value="1"/>
</dbReference>
<dbReference type="InterPro" id="IPR001398">
    <property type="entry name" value="Macrophage_inhib_fac"/>
</dbReference>
<dbReference type="InterPro" id="IPR019829">
    <property type="entry name" value="Macrophage_inhib_fac_CS"/>
</dbReference>
<dbReference type="InterPro" id="IPR014347">
    <property type="entry name" value="Tautomerase/MIF_sf"/>
</dbReference>
<dbReference type="PANTHER" id="PTHR11954">
    <property type="entry name" value="D-DOPACHROME DECARBOXYLASE"/>
    <property type="match status" value="1"/>
</dbReference>
<dbReference type="PANTHER" id="PTHR11954:SF6">
    <property type="entry name" value="MACROPHAGE MIGRATION INHIBITORY FACTOR"/>
    <property type="match status" value="1"/>
</dbReference>
<dbReference type="Pfam" id="PF01187">
    <property type="entry name" value="MIF"/>
    <property type="match status" value="1"/>
</dbReference>
<dbReference type="SUPFAM" id="SSF55331">
    <property type="entry name" value="Tautomerase/MIF"/>
    <property type="match status" value="1"/>
</dbReference>
<dbReference type="PROSITE" id="PS01158">
    <property type="entry name" value="MIF"/>
    <property type="match status" value="1"/>
</dbReference>
<reference key="1">
    <citation type="submission" date="1997-12" db="EMBL/GenBank/DDBJ databases">
        <authorList>
            <person name="Scott A.L."/>
            <person name="Josh S."/>
            <person name="Pastrana D."/>
            <person name="Eisinger S.W."/>
            <person name="Marson A."/>
            <person name="Ragahavan N."/>
        </authorList>
    </citation>
    <scope>NUCLEOTIDE SEQUENCE [MRNA]</scope>
    <source>
        <strain>Brazil</strain>
    </source>
</reference>
<evidence type="ECO:0000250" key="1"/>
<evidence type="ECO:0000305" key="2"/>
<comment type="function">
    <text evidence="1">Tautomerization of the methyl ester of L-dopachrome. Inhibits migration of human peripheral blood mononuclear cells (By similarity).</text>
</comment>
<comment type="catalytic activity">
    <reaction>
        <text>L-dopachrome = 5,6-dihydroxyindole-2-carboxylate</text>
        <dbReference type="Rhea" id="RHEA:13041"/>
        <dbReference type="ChEBI" id="CHEBI:16875"/>
        <dbReference type="ChEBI" id="CHEBI:57509"/>
        <dbReference type="EC" id="5.3.3.12"/>
    </reaction>
</comment>
<comment type="catalytic activity">
    <reaction>
        <text>3-phenylpyruvate = enol-phenylpyruvate</text>
        <dbReference type="Rhea" id="RHEA:17097"/>
        <dbReference type="ChEBI" id="CHEBI:16815"/>
        <dbReference type="ChEBI" id="CHEBI:18005"/>
        <dbReference type="EC" id="5.3.2.1"/>
    </reaction>
</comment>
<comment type="subcellular location">
    <subcellularLocation>
        <location evidence="2">Secreted</location>
    </subcellularLocation>
</comment>
<comment type="similarity">
    <text evidence="2">Belongs to the MIF family.</text>
</comment>
<feature type="initiator methionine" description="Removed" evidence="1">
    <location>
        <position position="1"/>
    </location>
</feature>
<feature type="chain" id="PRO_0000158077" description="Macrophage migration inhibitory factor homolog">
    <location>
        <begin position="2"/>
        <end position="115"/>
    </location>
</feature>
<feature type="active site" description="Proton acceptor; via imino nitrogen" evidence="1">
    <location>
        <position position="2"/>
    </location>
</feature>
<feature type="binding site" evidence="1">
    <location>
        <position position="33"/>
    </location>
    <ligand>
        <name>substrate</name>
    </ligand>
</feature>
<feature type="binding site" evidence="1">
    <location>
        <position position="65"/>
    </location>
    <ligand>
        <name>substrate</name>
    </ligand>
</feature>
<protein>
    <recommendedName>
        <fullName>Macrophage migration inhibitory factor homolog</fullName>
        <shortName>MIF</shortName>
        <ecNumber>5.3.2.1</ecNumber>
    </recommendedName>
    <alternativeName>
        <fullName>L-dopachrome isomerase</fullName>
    </alternativeName>
    <alternativeName>
        <fullName>L-dopachrome tautomerase</fullName>
        <ecNumber>5.3.3.12</ecNumber>
    </alternativeName>
    <alternativeName>
        <fullName>Phenylpyruvate tautomerase</fullName>
    </alternativeName>
</protein>
<accession>O44786</accession>
<sequence length="115" mass="12364">MPYFTIDTNKPQDSISSAFLKKAPNVVPKALGKPESYVSIHVNGGQPMVFGGSEDPCPVCVLKSIGCVGPKVNNSHAEKLYKLLADELKIPKNRCYIESVDIEASSMAFNGSTFG</sequence>
<keyword id="KW-0202">Cytokine</keyword>
<keyword id="KW-0413">Isomerase</keyword>
<keyword id="KW-0964">Secreted</keyword>
<gene>
    <name type="primary">MIF</name>
</gene>
<organism>
    <name type="scientific">Wuchereria bancrofti</name>
    <dbReference type="NCBI Taxonomy" id="6293"/>
    <lineage>
        <taxon>Eukaryota</taxon>
        <taxon>Metazoa</taxon>
        <taxon>Ecdysozoa</taxon>
        <taxon>Nematoda</taxon>
        <taxon>Chromadorea</taxon>
        <taxon>Rhabditida</taxon>
        <taxon>Spirurina</taxon>
        <taxon>Spiruromorpha</taxon>
        <taxon>Filarioidea</taxon>
        <taxon>Onchocercidae</taxon>
        <taxon>Wuchereria</taxon>
    </lineage>
</organism>
<name>MIFH_WUCBA</name>